<dbReference type="EMBL" id="CP000825">
    <property type="protein sequence ID" value="ABV50261.1"/>
    <property type="molecule type" value="Genomic_DNA"/>
</dbReference>
<dbReference type="RefSeq" id="WP_012007383.1">
    <property type="nucleotide sequence ID" value="NC_009840.1"/>
</dbReference>
<dbReference type="SMR" id="A8G3T0"/>
<dbReference type="STRING" id="93060.P9215_06461"/>
<dbReference type="KEGG" id="pmh:P9215_06461"/>
<dbReference type="eggNOG" id="COG0593">
    <property type="taxonomic scope" value="Bacteria"/>
</dbReference>
<dbReference type="HOGENOM" id="CLU_026910_3_1_3"/>
<dbReference type="OrthoDB" id="9807019at2"/>
<dbReference type="Proteomes" id="UP000002014">
    <property type="component" value="Chromosome"/>
</dbReference>
<dbReference type="GO" id="GO:0005737">
    <property type="term" value="C:cytoplasm"/>
    <property type="evidence" value="ECO:0007669"/>
    <property type="project" value="UniProtKB-SubCell"/>
</dbReference>
<dbReference type="GO" id="GO:0005886">
    <property type="term" value="C:plasma membrane"/>
    <property type="evidence" value="ECO:0007669"/>
    <property type="project" value="TreeGrafter"/>
</dbReference>
<dbReference type="GO" id="GO:0005524">
    <property type="term" value="F:ATP binding"/>
    <property type="evidence" value="ECO:0007669"/>
    <property type="project" value="UniProtKB-UniRule"/>
</dbReference>
<dbReference type="GO" id="GO:0016887">
    <property type="term" value="F:ATP hydrolysis activity"/>
    <property type="evidence" value="ECO:0007669"/>
    <property type="project" value="InterPro"/>
</dbReference>
<dbReference type="GO" id="GO:0003688">
    <property type="term" value="F:DNA replication origin binding"/>
    <property type="evidence" value="ECO:0007669"/>
    <property type="project" value="UniProtKB-UniRule"/>
</dbReference>
<dbReference type="GO" id="GO:0008289">
    <property type="term" value="F:lipid binding"/>
    <property type="evidence" value="ECO:0007669"/>
    <property type="project" value="UniProtKB-KW"/>
</dbReference>
<dbReference type="GO" id="GO:0006270">
    <property type="term" value="P:DNA replication initiation"/>
    <property type="evidence" value="ECO:0007669"/>
    <property type="project" value="UniProtKB-UniRule"/>
</dbReference>
<dbReference type="GO" id="GO:0006275">
    <property type="term" value="P:regulation of DNA replication"/>
    <property type="evidence" value="ECO:0007669"/>
    <property type="project" value="UniProtKB-UniRule"/>
</dbReference>
<dbReference type="CDD" id="cd00009">
    <property type="entry name" value="AAA"/>
    <property type="match status" value="1"/>
</dbReference>
<dbReference type="CDD" id="cd06571">
    <property type="entry name" value="Bac_DnaA_C"/>
    <property type="match status" value="1"/>
</dbReference>
<dbReference type="FunFam" id="3.40.50.300:FF:000668">
    <property type="entry name" value="Chromosomal replication initiator protein DnaA"/>
    <property type="match status" value="1"/>
</dbReference>
<dbReference type="Gene3D" id="1.10.1750.10">
    <property type="match status" value="1"/>
</dbReference>
<dbReference type="Gene3D" id="1.10.8.60">
    <property type="match status" value="1"/>
</dbReference>
<dbReference type="Gene3D" id="3.30.300.180">
    <property type="match status" value="1"/>
</dbReference>
<dbReference type="Gene3D" id="3.40.50.300">
    <property type="entry name" value="P-loop containing nucleotide triphosphate hydrolases"/>
    <property type="match status" value="1"/>
</dbReference>
<dbReference type="HAMAP" id="MF_00377">
    <property type="entry name" value="DnaA_bact"/>
    <property type="match status" value="1"/>
</dbReference>
<dbReference type="InterPro" id="IPR003593">
    <property type="entry name" value="AAA+_ATPase"/>
</dbReference>
<dbReference type="InterPro" id="IPR001957">
    <property type="entry name" value="Chromosome_initiator_DnaA"/>
</dbReference>
<dbReference type="InterPro" id="IPR020591">
    <property type="entry name" value="Chromosome_initiator_DnaA-like"/>
</dbReference>
<dbReference type="InterPro" id="IPR018312">
    <property type="entry name" value="Chromosome_initiator_DnaA_CS"/>
</dbReference>
<dbReference type="InterPro" id="IPR013159">
    <property type="entry name" value="DnaA_C"/>
</dbReference>
<dbReference type="InterPro" id="IPR013317">
    <property type="entry name" value="DnaA_dom"/>
</dbReference>
<dbReference type="InterPro" id="IPR024633">
    <property type="entry name" value="DnaA_N_dom"/>
</dbReference>
<dbReference type="InterPro" id="IPR038454">
    <property type="entry name" value="DnaA_N_sf"/>
</dbReference>
<dbReference type="InterPro" id="IPR027417">
    <property type="entry name" value="P-loop_NTPase"/>
</dbReference>
<dbReference type="InterPro" id="IPR010921">
    <property type="entry name" value="Trp_repressor/repl_initiator"/>
</dbReference>
<dbReference type="NCBIfam" id="TIGR00362">
    <property type="entry name" value="DnaA"/>
    <property type="match status" value="1"/>
</dbReference>
<dbReference type="PANTHER" id="PTHR30050">
    <property type="entry name" value="CHROMOSOMAL REPLICATION INITIATOR PROTEIN DNAA"/>
    <property type="match status" value="1"/>
</dbReference>
<dbReference type="PANTHER" id="PTHR30050:SF2">
    <property type="entry name" value="CHROMOSOMAL REPLICATION INITIATOR PROTEIN DNAA"/>
    <property type="match status" value="1"/>
</dbReference>
<dbReference type="Pfam" id="PF00308">
    <property type="entry name" value="Bac_DnaA"/>
    <property type="match status" value="1"/>
</dbReference>
<dbReference type="Pfam" id="PF08299">
    <property type="entry name" value="Bac_DnaA_C"/>
    <property type="match status" value="1"/>
</dbReference>
<dbReference type="Pfam" id="PF11638">
    <property type="entry name" value="DnaA_N"/>
    <property type="match status" value="1"/>
</dbReference>
<dbReference type="PRINTS" id="PR00051">
    <property type="entry name" value="DNAA"/>
</dbReference>
<dbReference type="SMART" id="SM00382">
    <property type="entry name" value="AAA"/>
    <property type="match status" value="1"/>
</dbReference>
<dbReference type="SMART" id="SM00760">
    <property type="entry name" value="Bac_DnaA_C"/>
    <property type="match status" value="1"/>
</dbReference>
<dbReference type="SUPFAM" id="SSF52540">
    <property type="entry name" value="P-loop containing nucleoside triphosphate hydrolases"/>
    <property type="match status" value="1"/>
</dbReference>
<dbReference type="SUPFAM" id="SSF48295">
    <property type="entry name" value="TrpR-like"/>
    <property type="match status" value="1"/>
</dbReference>
<dbReference type="PROSITE" id="PS01008">
    <property type="entry name" value="DNAA"/>
    <property type="match status" value="1"/>
</dbReference>
<keyword id="KW-0067">ATP-binding</keyword>
<keyword id="KW-0963">Cytoplasm</keyword>
<keyword id="KW-0235">DNA replication</keyword>
<keyword id="KW-0238">DNA-binding</keyword>
<keyword id="KW-0446">Lipid-binding</keyword>
<keyword id="KW-0547">Nucleotide-binding</keyword>
<protein>
    <recommendedName>
        <fullName evidence="1">Chromosomal replication initiator protein DnaA</fullName>
    </recommendedName>
</protein>
<gene>
    <name evidence="1" type="primary">dnaA</name>
    <name type="ordered locus">P9215_06461</name>
</gene>
<accession>A8G3T0</accession>
<feature type="chain" id="PRO_1000060017" description="Chromosomal replication initiator protein DnaA">
    <location>
        <begin position="1"/>
        <end position="464"/>
    </location>
</feature>
<feature type="region of interest" description="Domain I, interacts with DnaA modulators" evidence="1">
    <location>
        <begin position="1"/>
        <end position="79"/>
    </location>
</feature>
<feature type="region of interest" description="Domain II" evidence="1">
    <location>
        <begin position="79"/>
        <end position="123"/>
    </location>
</feature>
<feature type="region of interest" description="Domain III, AAA+ region" evidence="1">
    <location>
        <begin position="124"/>
        <end position="340"/>
    </location>
</feature>
<feature type="region of interest" description="Domain IV, binds dsDNA" evidence="1">
    <location>
        <begin position="341"/>
        <end position="464"/>
    </location>
</feature>
<feature type="binding site" evidence="1">
    <location>
        <position position="168"/>
    </location>
    <ligand>
        <name>ATP</name>
        <dbReference type="ChEBI" id="CHEBI:30616"/>
    </ligand>
</feature>
<feature type="binding site" evidence="1">
    <location>
        <position position="170"/>
    </location>
    <ligand>
        <name>ATP</name>
        <dbReference type="ChEBI" id="CHEBI:30616"/>
    </ligand>
</feature>
<feature type="binding site" evidence="1">
    <location>
        <position position="171"/>
    </location>
    <ligand>
        <name>ATP</name>
        <dbReference type="ChEBI" id="CHEBI:30616"/>
    </ligand>
</feature>
<feature type="binding site" evidence="1">
    <location>
        <position position="172"/>
    </location>
    <ligand>
        <name>ATP</name>
        <dbReference type="ChEBI" id="CHEBI:30616"/>
    </ligand>
</feature>
<evidence type="ECO:0000255" key="1">
    <source>
        <dbReference type="HAMAP-Rule" id="MF_00377"/>
    </source>
</evidence>
<name>DNAA_PROM2</name>
<reference key="1">
    <citation type="journal article" date="2007" name="PLoS Genet.">
        <title>Patterns and implications of gene gain and loss in the evolution of Prochlorococcus.</title>
        <authorList>
            <person name="Kettler G.C."/>
            <person name="Martiny A.C."/>
            <person name="Huang K."/>
            <person name="Zucker J."/>
            <person name="Coleman M.L."/>
            <person name="Rodrigue S."/>
            <person name="Chen F."/>
            <person name="Lapidus A."/>
            <person name="Ferriera S."/>
            <person name="Johnson J."/>
            <person name="Steglich C."/>
            <person name="Church G.M."/>
            <person name="Richardson P."/>
            <person name="Chisholm S.W."/>
        </authorList>
    </citation>
    <scope>NUCLEOTIDE SEQUENCE [LARGE SCALE GENOMIC DNA]</scope>
    <source>
        <strain>MIT 9215</strain>
    </source>
</reference>
<organism>
    <name type="scientific">Prochlorococcus marinus (strain MIT 9215)</name>
    <dbReference type="NCBI Taxonomy" id="93060"/>
    <lineage>
        <taxon>Bacteria</taxon>
        <taxon>Bacillati</taxon>
        <taxon>Cyanobacteriota</taxon>
        <taxon>Cyanophyceae</taxon>
        <taxon>Synechococcales</taxon>
        <taxon>Prochlorococcaceae</taxon>
        <taxon>Prochlorococcus</taxon>
    </lineage>
</organism>
<proteinExistence type="inferred from homology"/>
<sequence>MQTINPIWAEVQQSLQKTLSKPSFETWIRPAKFNCFENGLLTLIAPNTFSSDWLRKNYCQTIEKAAKEICGHDVKVVFKSETNISSDSINKENLDEQIVNHKTKLFHNNNQDISPKNRSKNPNGLNLRYVFKRFVVGPNSRLAHAAALAVAESPGREFNPLFICGGVGLGKTHLMQAIGHYRVEIDPEAKVKYVSTETFTNDVISGIRRDGMTAIRDKYRKVDLILIDDIQFLEGKEYTQEEFFHTFNALHESGSQIVIASDRPPNQLSGIQERLISRFSMGMTADIQPPDLETRTAILQKKAEQERMSLPRDLIQFIAGRFTSNIRELEGAFTRAVAFASITGLPMTVQSIAPMLDPNSVGVVVTPTQVIKKVSDFFKVSTDELISSSRRKPVSQARQIGMYLMRHGTDLSLPRIGDEFGGKDHTTVMYAIEQVEKKLSTDPNIASQVQKIRDLLQIDSRKNL</sequence>
<comment type="function">
    <text evidence="1">Plays an essential role in the initiation and regulation of chromosomal replication. ATP-DnaA binds to the origin of replication (oriC) to initiate formation of the DNA replication initiation complex once per cell cycle. Binds the DnaA box (a 9 base pair repeat at the origin) and separates the double-stranded (ds)DNA. Forms a right-handed helical filament on oriC DNA; dsDNA binds to the exterior of the filament while single-stranded (ss)DNA is stabiized in the filament's interior. The ATP-DnaA-oriC complex binds and stabilizes one strand of the AT-rich DNA unwinding element (DUE), permitting loading of DNA polymerase. After initiation quickly degrades to an ADP-DnaA complex that is not apt for DNA replication. Binds acidic phospholipids.</text>
</comment>
<comment type="subunit">
    <text evidence="1">Oligomerizes as a right-handed, spiral filament on DNA at oriC.</text>
</comment>
<comment type="subcellular location">
    <subcellularLocation>
        <location evidence="1">Cytoplasm</location>
    </subcellularLocation>
</comment>
<comment type="domain">
    <text evidence="1">Domain I is involved in oligomerization and binding regulators, domain II is flexibile and of varying length in different bacteria, domain III forms the AAA+ region, while domain IV binds dsDNA.</text>
</comment>
<comment type="similarity">
    <text evidence="1">Belongs to the DnaA family.</text>
</comment>